<protein>
    <recommendedName>
        <fullName evidence="1">Large ribosomal subunit protein bL20</fullName>
    </recommendedName>
    <alternativeName>
        <fullName evidence="2">50S ribosomal protein L20</fullName>
    </alternativeName>
</protein>
<name>RL20_ECO5E</name>
<keyword id="KW-0687">Ribonucleoprotein</keyword>
<keyword id="KW-0689">Ribosomal protein</keyword>
<keyword id="KW-0694">RNA-binding</keyword>
<keyword id="KW-0699">rRNA-binding</keyword>
<proteinExistence type="inferred from homology"/>
<accession>B5YQ04</accession>
<sequence>MARVKRGVIARARHKKILKQAKGYYGARSRVYRVAFQAVIKAGQYAYRDRRQRKRQFRQLWIARINAAARQNGISYSKFINGLKKASVEIDRKILADIAVFDKVAFTALVEKAKAALA</sequence>
<gene>
    <name evidence="1" type="primary">rplT</name>
    <name type="ordered locus">ECH74115_2434</name>
</gene>
<organism>
    <name type="scientific">Escherichia coli O157:H7 (strain EC4115 / EHEC)</name>
    <dbReference type="NCBI Taxonomy" id="444450"/>
    <lineage>
        <taxon>Bacteria</taxon>
        <taxon>Pseudomonadati</taxon>
        <taxon>Pseudomonadota</taxon>
        <taxon>Gammaproteobacteria</taxon>
        <taxon>Enterobacterales</taxon>
        <taxon>Enterobacteriaceae</taxon>
        <taxon>Escherichia</taxon>
    </lineage>
</organism>
<feature type="chain" id="PRO_1000122309" description="Large ribosomal subunit protein bL20">
    <location>
        <begin position="1"/>
        <end position="118"/>
    </location>
</feature>
<comment type="function">
    <text evidence="1">Binds directly to 23S ribosomal RNA and is necessary for the in vitro assembly process of the 50S ribosomal subunit. It is not involved in the protein synthesizing functions of that subunit.</text>
</comment>
<comment type="similarity">
    <text evidence="1">Belongs to the bacterial ribosomal protein bL20 family.</text>
</comment>
<evidence type="ECO:0000255" key="1">
    <source>
        <dbReference type="HAMAP-Rule" id="MF_00382"/>
    </source>
</evidence>
<evidence type="ECO:0000305" key="2"/>
<dbReference type="EMBL" id="CP001164">
    <property type="protein sequence ID" value="ACI35828.1"/>
    <property type="molecule type" value="Genomic_DNA"/>
</dbReference>
<dbReference type="RefSeq" id="WP_000124850.1">
    <property type="nucleotide sequence ID" value="NC_011353.1"/>
</dbReference>
<dbReference type="SMR" id="B5YQ04"/>
<dbReference type="GeneID" id="98388757"/>
<dbReference type="KEGG" id="ecf:ECH74115_2434"/>
<dbReference type="HOGENOM" id="CLU_123265_0_1_6"/>
<dbReference type="GO" id="GO:1990904">
    <property type="term" value="C:ribonucleoprotein complex"/>
    <property type="evidence" value="ECO:0007669"/>
    <property type="project" value="UniProtKB-KW"/>
</dbReference>
<dbReference type="GO" id="GO:0005840">
    <property type="term" value="C:ribosome"/>
    <property type="evidence" value="ECO:0007669"/>
    <property type="project" value="UniProtKB-KW"/>
</dbReference>
<dbReference type="GO" id="GO:0019843">
    <property type="term" value="F:rRNA binding"/>
    <property type="evidence" value="ECO:0007669"/>
    <property type="project" value="UniProtKB-UniRule"/>
</dbReference>
<dbReference type="GO" id="GO:0003735">
    <property type="term" value="F:structural constituent of ribosome"/>
    <property type="evidence" value="ECO:0007669"/>
    <property type="project" value="InterPro"/>
</dbReference>
<dbReference type="GO" id="GO:0000027">
    <property type="term" value="P:ribosomal large subunit assembly"/>
    <property type="evidence" value="ECO:0007669"/>
    <property type="project" value="UniProtKB-UniRule"/>
</dbReference>
<dbReference type="GO" id="GO:0006412">
    <property type="term" value="P:translation"/>
    <property type="evidence" value="ECO:0007669"/>
    <property type="project" value="InterPro"/>
</dbReference>
<dbReference type="CDD" id="cd07026">
    <property type="entry name" value="Ribosomal_L20"/>
    <property type="match status" value="1"/>
</dbReference>
<dbReference type="FunFam" id="1.10.1900.20:FF:000001">
    <property type="entry name" value="50S ribosomal protein L20"/>
    <property type="match status" value="1"/>
</dbReference>
<dbReference type="Gene3D" id="6.10.160.10">
    <property type="match status" value="1"/>
</dbReference>
<dbReference type="Gene3D" id="1.10.1900.20">
    <property type="entry name" value="Ribosomal protein L20"/>
    <property type="match status" value="1"/>
</dbReference>
<dbReference type="HAMAP" id="MF_00382">
    <property type="entry name" value="Ribosomal_bL20"/>
    <property type="match status" value="1"/>
</dbReference>
<dbReference type="InterPro" id="IPR005813">
    <property type="entry name" value="Ribosomal_bL20"/>
</dbReference>
<dbReference type="InterPro" id="IPR049946">
    <property type="entry name" value="RIBOSOMAL_L20_CS"/>
</dbReference>
<dbReference type="InterPro" id="IPR035566">
    <property type="entry name" value="Ribosomal_protein_bL20_C"/>
</dbReference>
<dbReference type="NCBIfam" id="TIGR01032">
    <property type="entry name" value="rplT_bact"/>
    <property type="match status" value="1"/>
</dbReference>
<dbReference type="PANTHER" id="PTHR10986">
    <property type="entry name" value="39S RIBOSOMAL PROTEIN L20"/>
    <property type="match status" value="1"/>
</dbReference>
<dbReference type="Pfam" id="PF00453">
    <property type="entry name" value="Ribosomal_L20"/>
    <property type="match status" value="1"/>
</dbReference>
<dbReference type="PRINTS" id="PR00062">
    <property type="entry name" value="RIBOSOMALL20"/>
</dbReference>
<dbReference type="SUPFAM" id="SSF74731">
    <property type="entry name" value="Ribosomal protein L20"/>
    <property type="match status" value="1"/>
</dbReference>
<dbReference type="PROSITE" id="PS00937">
    <property type="entry name" value="RIBOSOMAL_L20"/>
    <property type="match status" value="1"/>
</dbReference>
<reference key="1">
    <citation type="journal article" date="2011" name="Proc. Natl. Acad. Sci. U.S.A.">
        <title>Genomic anatomy of Escherichia coli O157:H7 outbreaks.</title>
        <authorList>
            <person name="Eppinger M."/>
            <person name="Mammel M.K."/>
            <person name="Leclerc J.E."/>
            <person name="Ravel J."/>
            <person name="Cebula T.A."/>
        </authorList>
    </citation>
    <scope>NUCLEOTIDE SEQUENCE [LARGE SCALE GENOMIC DNA]</scope>
    <source>
        <strain>EC4115 / EHEC</strain>
    </source>
</reference>